<comment type="function">
    <text evidence="1">Encapsidates the genome in a ratio of one N per nine ribonucleotides, protecting it from nucleases. The encapsidated genomic RNA is termed the NC and serves as template for transcription and replication. The nucleocapsid is bullet-shaped with the tip containing 8 turns of a conical spiral before reaching the helical cylindrical trunk. Nucleocapsid assembly is concomitant with replication, therefore viral replication depends on the intracellular concentration of free N, termed N(0). All replicative products are resistant to nucleases.</text>
</comment>
<comment type="subunit">
    <text evidence="1">Homomultimerizes to form the nucleocapsid. Binds to viral genomic RNA; this interaction contributes to the virion assembly. N in the nucleocapsid interacts (via C-terminus) with the P protein (via C-terminus); this interaction allows to package the L polymerase in the virion and positions the polymerase on the template, since P acts as a bridge between N and L. N(0) interacts with the P protein; this interaction prevents the uncontrolled aggregation of N(0). Interacts with the matrix protein (inner layer); this interaction contributes to the virion assembly. Interacts with the L polymerase.</text>
</comment>
<comment type="subcellular location">
    <subcellularLocation>
        <location evidence="1">Virion</location>
    </subcellularLocation>
    <subcellularLocation>
        <location evidence="1">Host cytoplasm</location>
    </subcellularLocation>
    <text evidence="1">The nucleocapsid is synthesized in the cytoplasm, and is subsequently transported via microtubules to the cell periphery. About 1240 copies of N are present in the virion.</text>
</comment>
<comment type="similarity">
    <text evidence="2">Belongs to the vesiculovirus nucleocapsid protein family.</text>
</comment>
<organismHost>
    <name type="scientific">Aedes</name>
    <dbReference type="NCBI Taxonomy" id="7158"/>
</organismHost>
<organismHost>
    <name type="scientific">Bos taurus</name>
    <name type="common">Bovine</name>
    <dbReference type="NCBI Taxonomy" id="9913"/>
</organismHost>
<organismHost>
    <name type="scientific">Culicoides</name>
    <dbReference type="NCBI Taxonomy" id="58271"/>
</organismHost>
<organismHost>
    <name type="scientific">Equus asinus</name>
    <name type="common">Donkey</name>
    <name type="synonym">Equus africanus asinus</name>
    <dbReference type="NCBI Taxonomy" id="9793"/>
</organismHost>
<organismHost>
    <name type="scientific">Equus caballus</name>
    <name type="common">Horse</name>
    <dbReference type="NCBI Taxonomy" id="9796"/>
</organismHost>
<organismHost>
    <name type="scientific">Homo sapiens</name>
    <name type="common">Human</name>
    <dbReference type="NCBI Taxonomy" id="9606"/>
</organismHost>
<organismHost>
    <name type="scientific">Lutzomyia</name>
    <dbReference type="NCBI Taxonomy" id="252607"/>
</organismHost>
<organismHost>
    <name type="scientific">Musca domestica</name>
    <name type="common">House fly</name>
    <dbReference type="NCBI Taxonomy" id="7370"/>
</organismHost>
<organismHost>
    <name type="scientific">Simuliidae</name>
    <name type="common">black flies</name>
    <dbReference type="NCBI Taxonomy" id="7190"/>
</organismHost>
<organismHost>
    <name type="scientific">Sus scrofa</name>
    <name type="common">Pig</name>
    <dbReference type="NCBI Taxonomy" id="9823"/>
</organismHost>
<name>NCAP_VSIVC</name>
<evidence type="ECO:0000250" key="1">
    <source>
        <dbReference type="UniProtKB" id="P03521"/>
    </source>
</evidence>
<evidence type="ECO:0000305" key="2"/>
<accession>Q8B0H4</accession>
<keyword id="KW-0167">Capsid protein</keyword>
<keyword id="KW-1139">Helical capsid protein</keyword>
<keyword id="KW-1035">Host cytoplasm</keyword>
<keyword id="KW-0687">Ribonucleoprotein</keyword>
<keyword id="KW-0694">RNA-binding</keyword>
<keyword id="KW-0543">Viral nucleoprotein</keyword>
<keyword id="KW-0946">Virion</keyword>
<gene>
    <name type="primary">N</name>
</gene>
<reference key="1">
    <citation type="journal article" date="2002" name="J. Gen. Virol.">
        <title>Full-length genome analysis of natural isolates of vesicular stomatitis virus (Indiana 1 serotype) from North, Central and South America.</title>
        <authorList>
            <person name="Rodriguez L.L."/>
            <person name="Pauszek S.J."/>
            <person name="Bunch T.A."/>
            <person name="Schumann K.R."/>
        </authorList>
    </citation>
    <scope>NUCLEOTIDE SEQUENCE [GENOMIC RNA]</scope>
</reference>
<organism>
    <name type="scientific">Vesicular stomatitis Indiana virus (strain 94GUB Central America)</name>
    <name type="common">VSIV</name>
    <dbReference type="NCBI Taxonomy" id="434489"/>
    <lineage>
        <taxon>Viruses</taxon>
        <taxon>Riboviria</taxon>
        <taxon>Orthornavirae</taxon>
        <taxon>Negarnaviricota</taxon>
        <taxon>Haploviricotina</taxon>
        <taxon>Monjiviricetes</taxon>
        <taxon>Mononegavirales</taxon>
        <taxon>Rhabdoviridae</taxon>
        <taxon>Alpharhabdovirinae</taxon>
        <taxon>Vesiculovirus</taxon>
        <taxon>Vesiculovirus indiana</taxon>
    </lineage>
</organism>
<protein>
    <recommendedName>
        <fullName>Nucleoprotein</fullName>
        <shortName>NP</shortName>
    </recommendedName>
    <alternativeName>
        <fullName>Nucleocapsid protein</fullName>
        <shortName>Protein N</shortName>
    </alternativeName>
</protein>
<dbReference type="EMBL" id="AF473866">
    <property type="protein sequence ID" value="AAN16990.1"/>
    <property type="molecule type" value="Genomic_RNA"/>
</dbReference>
<dbReference type="SMR" id="Q8B0H4"/>
<dbReference type="Proteomes" id="UP000007623">
    <property type="component" value="Genome"/>
</dbReference>
<dbReference type="GO" id="GO:0019029">
    <property type="term" value="C:helical viral capsid"/>
    <property type="evidence" value="ECO:0007669"/>
    <property type="project" value="UniProtKB-KW"/>
</dbReference>
<dbReference type="GO" id="GO:0030430">
    <property type="term" value="C:host cell cytoplasm"/>
    <property type="evidence" value="ECO:0007669"/>
    <property type="project" value="UniProtKB-SubCell"/>
</dbReference>
<dbReference type="GO" id="GO:1990904">
    <property type="term" value="C:ribonucleoprotein complex"/>
    <property type="evidence" value="ECO:0007669"/>
    <property type="project" value="UniProtKB-KW"/>
</dbReference>
<dbReference type="GO" id="GO:0019013">
    <property type="term" value="C:viral nucleocapsid"/>
    <property type="evidence" value="ECO:0007669"/>
    <property type="project" value="UniProtKB-KW"/>
</dbReference>
<dbReference type="GO" id="GO:0003723">
    <property type="term" value="F:RNA binding"/>
    <property type="evidence" value="ECO:0007669"/>
    <property type="project" value="UniProtKB-KW"/>
</dbReference>
<dbReference type="FunFam" id="1.10.3570.10:FF:000001">
    <property type="entry name" value="Nucleoprotein"/>
    <property type="match status" value="1"/>
</dbReference>
<dbReference type="FunFam" id="1.10.3610.10:FF:000001">
    <property type="entry name" value="Nucleoprotein"/>
    <property type="match status" value="1"/>
</dbReference>
<dbReference type="Gene3D" id="1.10.3610.10">
    <property type="entry name" value="Nucleoprotein"/>
    <property type="match status" value="1"/>
</dbReference>
<dbReference type="Gene3D" id="1.10.3570.10">
    <property type="entry name" value="Rhabdovirus nucleocapsid protein like domain"/>
    <property type="match status" value="1"/>
</dbReference>
<dbReference type="InterPro" id="IPR000448">
    <property type="entry name" value="Rhabdo_ncapsid"/>
</dbReference>
<dbReference type="InterPro" id="IPR023331">
    <property type="entry name" value="Rhabdovirus_ncapsid_C"/>
</dbReference>
<dbReference type="InterPro" id="IPR023330">
    <property type="entry name" value="Rhabdovirus_ncapsid_N"/>
</dbReference>
<dbReference type="InterPro" id="IPR035961">
    <property type="entry name" value="Rhabdovirus_nucleoprotein-like"/>
</dbReference>
<dbReference type="Pfam" id="PF00945">
    <property type="entry name" value="Rhabdo_ncap"/>
    <property type="match status" value="1"/>
</dbReference>
<dbReference type="SUPFAM" id="SSF140809">
    <property type="entry name" value="Rhabdovirus nucleoprotein-like"/>
    <property type="match status" value="1"/>
</dbReference>
<feature type="chain" id="PRO_0000287269" description="Nucleoprotein">
    <location>
        <begin position="1"/>
        <end position="422"/>
    </location>
</feature>
<feature type="region of interest" description="Interaction with the phosphoprotein" evidence="1">
    <location>
        <begin position="350"/>
        <end position="390"/>
    </location>
</feature>
<feature type="binding site" evidence="1">
    <location>
        <position position="143"/>
    </location>
    <ligand>
        <name>RNA</name>
        <dbReference type="ChEBI" id="CHEBI:33697"/>
    </ligand>
</feature>
<feature type="binding site" evidence="1">
    <location>
        <position position="152"/>
    </location>
    <ligand>
        <name>RNA</name>
        <dbReference type="ChEBI" id="CHEBI:33697"/>
    </ligand>
</feature>
<feature type="binding site" evidence="1">
    <location>
        <position position="206"/>
    </location>
    <ligand>
        <name>RNA</name>
        <dbReference type="ChEBI" id="CHEBI:33697"/>
    </ligand>
</feature>
<feature type="binding site" evidence="1">
    <location>
        <position position="214"/>
    </location>
    <ligand>
        <name>RNA</name>
        <dbReference type="ChEBI" id="CHEBI:33697"/>
    </ligand>
</feature>
<feature type="binding site" evidence="1">
    <location>
        <position position="286"/>
    </location>
    <ligand>
        <name>RNA</name>
        <dbReference type="ChEBI" id="CHEBI:33697"/>
    </ligand>
</feature>
<feature type="binding site" evidence="1">
    <location>
        <position position="317"/>
    </location>
    <ligand>
        <name>RNA</name>
        <dbReference type="ChEBI" id="CHEBI:33697"/>
    </ligand>
</feature>
<feature type="binding site" evidence="1">
    <location>
        <position position="408"/>
    </location>
    <ligand>
        <name>RNA</name>
        <dbReference type="ChEBI" id="CHEBI:33697"/>
    </ligand>
</feature>
<sequence>MSVTVKRIIDNTVIVPKLPANEDPVEYPADYFKKSKEIPLYINTTKSLSDLRGYVYQGLKSGNVSIIHVNSYLYGALKDIRGKLDKDWSSFGINIGKAGDTIGIFDLVSLKALDGVLPDGVSDASRTSADDKWLPLYLLGLYRVGRTQMPEYRKKLMDGLTNQCKMINEQFEPLVPEGRDIFDVWGNDSNYTKIVAAVDMFFHMFKKHECASFRYGTIVSRFKDCAALATFGHLCKITGMSTEDVTTWILNREVADEMAQMMLPGQEIDKADSYMPYLIDFGLSSKSPYSSVKNPAFHFWGQLTALLLRSTRARNARQPDDIEYTSLTTAGLLYAYAVGSSADLAQQFCVGDNKYTPDDNTGGLTTNAPPQGRDVVEWLGWFEDQNRKPTPDMMQYAKRAVMSLQGLREKTIGKYAKSEFDK</sequence>
<proteinExistence type="inferred from homology"/>